<dbReference type="EMBL" id="AY178864">
    <property type="protein sequence ID" value="AAP29407.2"/>
    <property type="molecule type" value="Genomic_DNA"/>
</dbReference>
<dbReference type="RefSeq" id="NP_848076.2">
    <property type="nucleotide sequence ID" value="NC_004766.1"/>
</dbReference>
<dbReference type="SMR" id="Q85FK6"/>
<dbReference type="GeneID" id="807411"/>
<dbReference type="GO" id="GO:0009535">
    <property type="term" value="C:chloroplast thylakoid membrane"/>
    <property type="evidence" value="ECO:0007669"/>
    <property type="project" value="UniProtKB-SubCell"/>
</dbReference>
<dbReference type="GO" id="GO:0009539">
    <property type="term" value="C:photosystem II reaction center"/>
    <property type="evidence" value="ECO:0007669"/>
    <property type="project" value="InterPro"/>
</dbReference>
<dbReference type="GO" id="GO:0009055">
    <property type="term" value="F:electron transfer activity"/>
    <property type="evidence" value="ECO:0007669"/>
    <property type="project" value="UniProtKB-UniRule"/>
</dbReference>
<dbReference type="GO" id="GO:0020037">
    <property type="term" value="F:heme binding"/>
    <property type="evidence" value="ECO:0007669"/>
    <property type="project" value="InterPro"/>
</dbReference>
<dbReference type="GO" id="GO:0005506">
    <property type="term" value="F:iron ion binding"/>
    <property type="evidence" value="ECO:0007669"/>
    <property type="project" value="UniProtKB-UniRule"/>
</dbReference>
<dbReference type="GO" id="GO:0009767">
    <property type="term" value="P:photosynthetic electron transport chain"/>
    <property type="evidence" value="ECO:0007669"/>
    <property type="project" value="InterPro"/>
</dbReference>
<dbReference type="HAMAP" id="MF_00643">
    <property type="entry name" value="PSII_PsbF"/>
    <property type="match status" value="1"/>
</dbReference>
<dbReference type="InterPro" id="IPR006241">
    <property type="entry name" value="PSII_cyt_b559_bsu"/>
</dbReference>
<dbReference type="InterPro" id="IPR006216">
    <property type="entry name" value="PSII_cyt_b559_CS"/>
</dbReference>
<dbReference type="InterPro" id="IPR013081">
    <property type="entry name" value="PSII_cyt_b559_N"/>
</dbReference>
<dbReference type="NCBIfam" id="TIGR01333">
    <property type="entry name" value="cyt_b559_beta"/>
    <property type="match status" value="1"/>
</dbReference>
<dbReference type="Pfam" id="PF00283">
    <property type="entry name" value="Cytochrom_B559"/>
    <property type="match status" value="1"/>
</dbReference>
<dbReference type="PIRSF" id="PIRSF000037">
    <property type="entry name" value="PsbF"/>
    <property type="match status" value="1"/>
</dbReference>
<dbReference type="SUPFAM" id="SSF161045">
    <property type="entry name" value="Cytochrome b559 subunits"/>
    <property type="match status" value="1"/>
</dbReference>
<dbReference type="PROSITE" id="PS00537">
    <property type="entry name" value="CYTOCHROME_B559"/>
    <property type="match status" value="1"/>
</dbReference>
<keyword id="KW-0150">Chloroplast</keyword>
<keyword id="KW-0249">Electron transport</keyword>
<keyword id="KW-0349">Heme</keyword>
<keyword id="KW-0408">Iron</keyword>
<keyword id="KW-0472">Membrane</keyword>
<keyword id="KW-0479">Metal-binding</keyword>
<keyword id="KW-0602">Photosynthesis</keyword>
<keyword id="KW-0604">Photosystem II</keyword>
<keyword id="KW-0934">Plastid</keyword>
<keyword id="KW-0691">RNA editing</keyword>
<keyword id="KW-0793">Thylakoid</keyword>
<keyword id="KW-0812">Transmembrane</keyword>
<keyword id="KW-1133">Transmembrane helix</keyword>
<keyword id="KW-0813">Transport</keyword>
<accession>Q85FK6</accession>
<gene>
    <name evidence="1" type="primary">psbF</name>
</gene>
<geneLocation type="chloroplast"/>
<feature type="chain" id="PRO_0000200349" description="Cytochrome b559 subunit beta">
    <location>
        <begin position="1"/>
        <end position="39"/>
    </location>
</feature>
<feature type="transmembrane region" description="Helical" evidence="1">
    <location>
        <begin position="14"/>
        <end position="30"/>
    </location>
</feature>
<feature type="binding site" description="axial binding residue" evidence="1">
    <location>
        <position position="18"/>
    </location>
    <ligand>
        <name>heme</name>
        <dbReference type="ChEBI" id="CHEBI:30413"/>
        <note>ligand shared with alpha subunit</note>
    </ligand>
    <ligandPart>
        <name>Fe</name>
        <dbReference type="ChEBI" id="CHEBI:18248"/>
    </ligandPart>
</feature>
<evidence type="ECO:0000255" key="1">
    <source>
        <dbReference type="HAMAP-Rule" id="MF_00643"/>
    </source>
</evidence>
<evidence type="ECO:0000269" key="2">
    <source>
    </source>
</evidence>
<comment type="function">
    <text evidence="1">This b-type cytochrome is tightly associated with the reaction center of photosystem II (PSII). PSII is a light-driven water:plastoquinone oxidoreductase that uses light energy to abstract electrons from H(2)O, generating O(2) and a proton gradient subsequently used for ATP formation. It consists of a core antenna complex that captures photons, and an electron transfer chain that converts photonic excitation into a charge separation.</text>
</comment>
<comment type="cofactor">
    <cofactor evidence="1">
        <name>heme b</name>
        <dbReference type="ChEBI" id="CHEBI:60344"/>
    </cofactor>
    <text evidence="1">With its partner (PsbE) binds heme. PSII binds additional chlorophylls, carotenoids and specific lipids.</text>
</comment>
<comment type="subunit">
    <text evidence="1">Heterodimer of an alpha subunit and a beta subunit. PSII is composed of 1 copy each of membrane proteins PsbA, PsbB, PsbC, PsbD, PsbE, PsbF, PsbH, PsbI, PsbJ, PsbK, PsbL, PsbM, PsbT, PsbX, PsbY, PsbZ, Psb30/Ycf12, at least 3 peripheral proteins of the oxygen-evolving complex and a large number of cofactors. It forms dimeric complexes.</text>
</comment>
<comment type="subcellular location">
    <subcellularLocation>
        <location evidence="1">Plastid</location>
        <location evidence="1">Chloroplast thylakoid membrane</location>
        <topology evidence="1">Single-pass membrane protein</topology>
    </subcellularLocation>
</comment>
<comment type="RNA editing">
    <location>
        <position position="1" evidence="2"/>
    </location>
    <location>
        <position position="27" evidence="2"/>
    </location>
    <location>
        <position position="28" evidence="2"/>
    </location>
    <location>
        <position position="34" evidence="2"/>
    </location>
    <text>The initiator methionine is created by RNA editing.</text>
</comment>
<comment type="similarity">
    <text evidence="1">Belongs to the PsbE/PsbF family.</text>
</comment>
<proteinExistence type="evidence at transcript level"/>
<sequence length="39" mass="4426">MALDKTYPIFTVRWLAVHGLAVPTVFFLGSISAMQFIQR</sequence>
<name>PSBF_ADICA</name>
<reference key="1">
    <citation type="journal article" date="2003" name="DNA Res.">
        <title>Complete nucleotide sequence of the chloroplast genome from a leptosporangiate fern, Adiantum capillus-veneris L.</title>
        <authorList>
            <person name="Wolf P.G."/>
            <person name="Rowe C.A."/>
            <person name="Sinclair R.B."/>
            <person name="Hasebe M."/>
        </authorList>
    </citation>
    <scope>NUCLEOTIDE SEQUENCE [LARGE SCALE GENOMIC DNA]</scope>
</reference>
<reference key="2">
    <citation type="journal article" date="2004" name="Gene">
        <title>High levels of RNA editing in a vascular plant chloroplast genome: analysis of transcripts from the fern Adiantum capillus-veneris.</title>
        <authorList>
            <person name="Wolf P.G."/>
            <person name="Rowe C.A."/>
            <person name="Hasebe M."/>
        </authorList>
    </citation>
    <scope>NUCLEOTIDE SEQUENCE [GENOMIC DNA]</scope>
    <scope>RNA EDITING</scope>
    <source>
        <tissue>Frond</tissue>
    </source>
</reference>
<organism>
    <name type="scientific">Adiantum capillus-veneris</name>
    <name type="common">Maidenhair fern</name>
    <dbReference type="NCBI Taxonomy" id="13818"/>
    <lineage>
        <taxon>Eukaryota</taxon>
        <taxon>Viridiplantae</taxon>
        <taxon>Streptophyta</taxon>
        <taxon>Embryophyta</taxon>
        <taxon>Tracheophyta</taxon>
        <taxon>Polypodiopsida</taxon>
        <taxon>Polypodiidae</taxon>
        <taxon>Polypodiales</taxon>
        <taxon>Pteridineae</taxon>
        <taxon>Pteridaceae</taxon>
        <taxon>Vittarioideae</taxon>
        <taxon>Adiantum</taxon>
    </lineage>
</organism>
<protein>
    <recommendedName>
        <fullName evidence="1">Cytochrome b559 subunit beta</fullName>
    </recommendedName>
    <alternativeName>
        <fullName evidence="1">PSII reaction center subunit VI</fullName>
    </alternativeName>
</protein>